<gene>
    <name evidence="1" type="primary">frr</name>
    <name type="ordered locus">BVU_1867</name>
</gene>
<sequence length="186" mass="20737">MIDAKTCINDAQEKMDMAVMYLEEALAHIRAGKASTRLLDGIRVDSYGSMVPISNVAAVTTPDARSIAIKPWDKSMFRIIEKAIMDSDLGITPENNGEIIRLGIPPLTEERRKQLAKQCKGEGETAKVSIRNARRDAIDTLKKAVKEGMPEDEQKNAEAKLQKVHDKYIAKIEELLAEKDKEIMTV</sequence>
<proteinExistence type="inferred from homology"/>
<protein>
    <recommendedName>
        <fullName evidence="1">Ribosome-recycling factor</fullName>
        <shortName evidence="1">RRF</shortName>
    </recommendedName>
    <alternativeName>
        <fullName evidence="1">Ribosome-releasing factor</fullName>
    </alternativeName>
</protein>
<keyword id="KW-0963">Cytoplasm</keyword>
<keyword id="KW-0648">Protein biosynthesis</keyword>
<evidence type="ECO:0000255" key="1">
    <source>
        <dbReference type="HAMAP-Rule" id="MF_00040"/>
    </source>
</evidence>
<feature type="chain" id="PRO_1000003107" description="Ribosome-recycling factor">
    <location>
        <begin position="1"/>
        <end position="186"/>
    </location>
</feature>
<dbReference type="EMBL" id="CP000139">
    <property type="protein sequence ID" value="ABR39542.1"/>
    <property type="molecule type" value="Genomic_DNA"/>
</dbReference>
<dbReference type="RefSeq" id="WP_005839846.1">
    <property type="nucleotide sequence ID" value="NZ_JANSWM010000118.1"/>
</dbReference>
<dbReference type="SMR" id="A6L1H8"/>
<dbReference type="STRING" id="435590.BVU_1867"/>
<dbReference type="PaxDb" id="435590-BVU_1867"/>
<dbReference type="GeneID" id="93445642"/>
<dbReference type="KEGG" id="bvu:BVU_1867"/>
<dbReference type="eggNOG" id="COG0233">
    <property type="taxonomic scope" value="Bacteria"/>
</dbReference>
<dbReference type="HOGENOM" id="CLU_073981_2_0_10"/>
<dbReference type="BioCyc" id="BVUL435590:G1G59-1956-MONOMER"/>
<dbReference type="Proteomes" id="UP000002861">
    <property type="component" value="Chromosome"/>
</dbReference>
<dbReference type="GO" id="GO:0005737">
    <property type="term" value="C:cytoplasm"/>
    <property type="evidence" value="ECO:0007669"/>
    <property type="project" value="UniProtKB-SubCell"/>
</dbReference>
<dbReference type="GO" id="GO:0043023">
    <property type="term" value="F:ribosomal large subunit binding"/>
    <property type="evidence" value="ECO:0007669"/>
    <property type="project" value="TreeGrafter"/>
</dbReference>
<dbReference type="GO" id="GO:0006415">
    <property type="term" value="P:translational termination"/>
    <property type="evidence" value="ECO:0007669"/>
    <property type="project" value="UniProtKB-UniRule"/>
</dbReference>
<dbReference type="CDD" id="cd00520">
    <property type="entry name" value="RRF"/>
    <property type="match status" value="1"/>
</dbReference>
<dbReference type="FunFam" id="1.10.132.20:FF:000001">
    <property type="entry name" value="Ribosome-recycling factor"/>
    <property type="match status" value="1"/>
</dbReference>
<dbReference type="FunFam" id="3.30.1360.40:FF:000001">
    <property type="entry name" value="Ribosome-recycling factor"/>
    <property type="match status" value="1"/>
</dbReference>
<dbReference type="Gene3D" id="3.30.1360.40">
    <property type="match status" value="1"/>
</dbReference>
<dbReference type="Gene3D" id="1.10.132.20">
    <property type="entry name" value="Ribosome-recycling factor"/>
    <property type="match status" value="1"/>
</dbReference>
<dbReference type="HAMAP" id="MF_00040">
    <property type="entry name" value="RRF"/>
    <property type="match status" value="1"/>
</dbReference>
<dbReference type="InterPro" id="IPR002661">
    <property type="entry name" value="Ribosome_recyc_fac"/>
</dbReference>
<dbReference type="InterPro" id="IPR023584">
    <property type="entry name" value="Ribosome_recyc_fac_dom"/>
</dbReference>
<dbReference type="InterPro" id="IPR036191">
    <property type="entry name" value="RRF_sf"/>
</dbReference>
<dbReference type="NCBIfam" id="TIGR00496">
    <property type="entry name" value="frr"/>
    <property type="match status" value="1"/>
</dbReference>
<dbReference type="PANTHER" id="PTHR20982:SF3">
    <property type="entry name" value="MITOCHONDRIAL RIBOSOME RECYCLING FACTOR PSEUDO 1"/>
    <property type="match status" value="1"/>
</dbReference>
<dbReference type="PANTHER" id="PTHR20982">
    <property type="entry name" value="RIBOSOME RECYCLING FACTOR"/>
    <property type="match status" value="1"/>
</dbReference>
<dbReference type="Pfam" id="PF01765">
    <property type="entry name" value="RRF"/>
    <property type="match status" value="1"/>
</dbReference>
<dbReference type="SUPFAM" id="SSF55194">
    <property type="entry name" value="Ribosome recycling factor, RRF"/>
    <property type="match status" value="1"/>
</dbReference>
<comment type="function">
    <text evidence="1">Responsible for the release of ribosomes from messenger RNA at the termination of protein biosynthesis. May increase the efficiency of translation by recycling ribosomes from one round of translation to another.</text>
</comment>
<comment type="subcellular location">
    <subcellularLocation>
        <location evidence="1">Cytoplasm</location>
    </subcellularLocation>
</comment>
<comment type="similarity">
    <text evidence="1">Belongs to the RRF family.</text>
</comment>
<organism>
    <name type="scientific">Phocaeicola vulgatus (strain ATCC 8482 / DSM 1447 / JCM 5826 / CCUG 4940 / NBRC 14291 / NCTC 11154)</name>
    <name type="common">Bacteroides vulgatus</name>
    <dbReference type="NCBI Taxonomy" id="435590"/>
    <lineage>
        <taxon>Bacteria</taxon>
        <taxon>Pseudomonadati</taxon>
        <taxon>Bacteroidota</taxon>
        <taxon>Bacteroidia</taxon>
        <taxon>Bacteroidales</taxon>
        <taxon>Bacteroidaceae</taxon>
        <taxon>Phocaeicola</taxon>
    </lineage>
</organism>
<reference key="1">
    <citation type="journal article" date="2007" name="PLoS Biol.">
        <title>Evolution of symbiotic bacteria in the distal human intestine.</title>
        <authorList>
            <person name="Xu J."/>
            <person name="Mahowald M.A."/>
            <person name="Ley R.E."/>
            <person name="Lozupone C.A."/>
            <person name="Hamady M."/>
            <person name="Martens E.C."/>
            <person name="Henrissat B."/>
            <person name="Coutinho P.M."/>
            <person name="Minx P."/>
            <person name="Latreille P."/>
            <person name="Cordum H."/>
            <person name="Van Brunt A."/>
            <person name="Kim K."/>
            <person name="Fulton R.S."/>
            <person name="Fulton L.A."/>
            <person name="Clifton S.W."/>
            <person name="Wilson R.K."/>
            <person name="Knight R.D."/>
            <person name="Gordon J.I."/>
        </authorList>
    </citation>
    <scope>NUCLEOTIDE SEQUENCE [LARGE SCALE GENOMIC DNA]</scope>
    <source>
        <strain>ATCC 8482 / DSM 1447 / JCM 5826 / CCUG 4940 / NBRC 14291 / NCTC 11154</strain>
    </source>
</reference>
<accession>A6L1H8</accession>
<name>RRF_PHOV8</name>